<evidence type="ECO:0000250" key="1">
    <source>
        <dbReference type="UniProtKB" id="A0R5M8"/>
    </source>
</evidence>
<evidence type="ECO:0000250" key="2">
    <source>
        <dbReference type="UniProtKB" id="G7CFI3"/>
    </source>
</evidence>
<evidence type="ECO:0000250" key="3">
    <source>
        <dbReference type="UniProtKB" id="Q7RX33"/>
    </source>
</evidence>
<evidence type="ECO:0000269" key="4">
    <source>
    </source>
</evidence>
<evidence type="ECO:0000269" key="5">
    <source>
    </source>
</evidence>
<evidence type="ECO:0000269" key="6">
    <source>
    </source>
</evidence>
<evidence type="ECO:0000303" key="7">
    <source>
    </source>
</evidence>
<evidence type="ECO:0000303" key="8">
    <source>
    </source>
</evidence>
<evidence type="ECO:0000305" key="9"/>
<evidence type="ECO:0000312" key="10">
    <source>
        <dbReference type="PomBase" id="SPBC1604.01"/>
    </source>
</evidence>
<organism>
    <name type="scientific">Schizosaccharomyces pombe (strain 972 / ATCC 24843)</name>
    <name type="common">Fission yeast</name>
    <dbReference type="NCBI Taxonomy" id="284812"/>
    <lineage>
        <taxon>Eukaryota</taxon>
        <taxon>Fungi</taxon>
        <taxon>Dikarya</taxon>
        <taxon>Ascomycota</taxon>
        <taxon>Taphrinomycotina</taxon>
        <taxon>Schizosaccharomycetes</taxon>
        <taxon>Schizosaccharomycetales</taxon>
        <taxon>Schizosaccharomycetaceae</taxon>
        <taxon>Schizosaccharomyces</taxon>
    </lineage>
</organism>
<proteinExistence type="evidence at protein level"/>
<feature type="chain" id="PRO_0000278511" description="Ergothioneine biosynthesis protein 1">
    <location>
        <begin position="1"/>
        <end position="773"/>
    </location>
</feature>
<feature type="region of interest" description="L-histidine N(alpha)-methyltransferase" evidence="9">
    <location>
        <begin position="16"/>
        <end position="322"/>
    </location>
</feature>
<feature type="region of interest" description="Hercynylcysteine S-oxide synthase" evidence="9">
    <location>
        <begin position="347"/>
        <end position="772"/>
    </location>
</feature>
<feature type="binding site" evidence="1">
    <location>
        <position position="51"/>
    </location>
    <ligand>
        <name>L-histidine</name>
        <dbReference type="ChEBI" id="CHEBI:57595"/>
    </ligand>
</feature>
<feature type="binding site" evidence="1">
    <location>
        <position position="85"/>
    </location>
    <ligand>
        <name>S-adenosyl-L-methionine</name>
        <dbReference type="ChEBI" id="CHEBI:59789"/>
    </ligand>
</feature>
<feature type="binding site" evidence="1">
    <location>
        <position position="91"/>
    </location>
    <ligand>
        <name>S-adenosyl-L-methionine</name>
        <dbReference type="ChEBI" id="CHEBI:59789"/>
    </ligand>
</feature>
<feature type="binding site" evidence="1">
    <location>
        <position position="112"/>
    </location>
    <ligand>
        <name>S-adenosyl-L-methionine</name>
        <dbReference type="ChEBI" id="CHEBI:59789"/>
    </ligand>
</feature>
<feature type="binding site" evidence="1">
    <location>
        <begin position="142"/>
        <end position="143"/>
    </location>
    <ligand>
        <name>S-adenosyl-L-methionine</name>
        <dbReference type="ChEBI" id="CHEBI:59789"/>
    </ligand>
</feature>
<feature type="binding site" evidence="1">
    <location>
        <position position="172"/>
    </location>
    <ligand>
        <name>L-histidine</name>
        <dbReference type="ChEBI" id="CHEBI:57595"/>
    </ligand>
</feature>
<feature type="binding site" evidence="1">
    <location>
        <position position="212"/>
    </location>
    <ligand>
        <name>L-histidine</name>
        <dbReference type="ChEBI" id="CHEBI:57595"/>
    </ligand>
</feature>
<feature type="binding site" evidence="1">
    <location>
        <begin position="287"/>
        <end position="289"/>
    </location>
    <ligand>
        <name>L-histidine</name>
        <dbReference type="ChEBI" id="CHEBI:57595"/>
    </ligand>
</feature>
<feature type="binding site" evidence="2">
    <location>
        <position position="382"/>
    </location>
    <ligand>
        <name>Fe cation</name>
        <dbReference type="ChEBI" id="CHEBI:24875"/>
    </ligand>
</feature>
<feature type="binding site" evidence="2">
    <location>
        <position position="476"/>
    </location>
    <ligand>
        <name>Fe cation</name>
        <dbReference type="ChEBI" id="CHEBI:24875"/>
    </ligand>
</feature>
<feature type="binding site" evidence="2">
    <location>
        <position position="480"/>
    </location>
    <ligand>
        <name>Fe cation</name>
        <dbReference type="ChEBI" id="CHEBI:24875"/>
    </ligand>
</feature>
<keyword id="KW-0963">Cytoplasm</keyword>
<keyword id="KW-0408">Iron</keyword>
<keyword id="KW-0469">Meiosis</keyword>
<keyword id="KW-0479">Metal-binding</keyword>
<keyword id="KW-0489">Methyltransferase</keyword>
<keyword id="KW-0503">Monooxygenase</keyword>
<keyword id="KW-0539">Nucleus</keyword>
<keyword id="KW-0560">Oxidoreductase</keyword>
<keyword id="KW-1185">Reference proteome</keyword>
<keyword id="KW-0949">S-adenosyl-L-methionine</keyword>
<keyword id="KW-0808">Transferase</keyword>
<gene>
    <name evidence="8" type="primary">egt1</name>
    <name evidence="7" type="synonym">mug158</name>
    <name evidence="10" type="ORF">SPBC1604.01</name>
    <name type="ORF">SPBC1677.01c</name>
</gene>
<dbReference type="EC" id="2.1.1.44" evidence="3"/>
<dbReference type="EC" id="1.21.3.10" evidence="3"/>
<dbReference type="EMBL" id="CU329671">
    <property type="protein sequence ID" value="CAA22334.2"/>
    <property type="molecule type" value="Genomic_DNA"/>
</dbReference>
<dbReference type="PIR" id="T39513">
    <property type="entry name" value="T39513"/>
</dbReference>
<dbReference type="RefSeq" id="NP_596639.2">
    <property type="nucleotide sequence ID" value="NM_001022560.3"/>
</dbReference>
<dbReference type="SMR" id="O94632"/>
<dbReference type="FunCoup" id="O94632">
    <property type="interactions" value="12"/>
</dbReference>
<dbReference type="STRING" id="284812.O94632"/>
<dbReference type="iPTMnet" id="O94632"/>
<dbReference type="PaxDb" id="4896-SPBC1604.01.1"/>
<dbReference type="EnsemblFungi" id="SPBC1604.01.1">
    <property type="protein sequence ID" value="SPBC1604.01.1:pep"/>
    <property type="gene ID" value="SPBC1604.01"/>
</dbReference>
<dbReference type="GeneID" id="2539656"/>
<dbReference type="KEGG" id="spo:2539656"/>
<dbReference type="PomBase" id="SPBC1604.01">
    <property type="gene designation" value="egt1"/>
</dbReference>
<dbReference type="VEuPathDB" id="FungiDB:SPBC1604.01"/>
<dbReference type="eggNOG" id="ENOG502QS9T">
    <property type="taxonomic scope" value="Eukaryota"/>
</dbReference>
<dbReference type="HOGENOM" id="CLU_006921_0_1_1"/>
<dbReference type="InParanoid" id="O94632"/>
<dbReference type="OMA" id="FKHWHPT"/>
<dbReference type="PhylomeDB" id="O94632"/>
<dbReference type="BRENDA" id="1.14.99.51">
    <property type="organism ID" value="5613"/>
</dbReference>
<dbReference type="UniPathway" id="UPA01014"/>
<dbReference type="PRO" id="PR:O94632"/>
<dbReference type="Proteomes" id="UP000002485">
    <property type="component" value="Chromosome II"/>
</dbReference>
<dbReference type="GO" id="GO:0005829">
    <property type="term" value="C:cytosol"/>
    <property type="evidence" value="ECO:0007005"/>
    <property type="project" value="PomBase"/>
</dbReference>
<dbReference type="GO" id="GO:0005634">
    <property type="term" value="C:nucleus"/>
    <property type="evidence" value="ECO:0007005"/>
    <property type="project" value="PomBase"/>
</dbReference>
<dbReference type="GO" id="GO:0005509">
    <property type="term" value="F:calcium ion binding"/>
    <property type="evidence" value="ECO:0000250"/>
    <property type="project" value="PomBase"/>
</dbReference>
<dbReference type="GO" id="GO:0061686">
    <property type="term" value="F:hercynylcysteine sulfoxide synthase activity"/>
    <property type="evidence" value="ECO:0007669"/>
    <property type="project" value="RHEA"/>
</dbReference>
<dbReference type="GO" id="GO:0052706">
    <property type="term" value="F:L-histidine N(alpha)-methyltransferase activity"/>
    <property type="evidence" value="ECO:0000315"/>
    <property type="project" value="PomBase"/>
</dbReference>
<dbReference type="GO" id="GO:0004497">
    <property type="term" value="F:monooxygenase activity"/>
    <property type="evidence" value="ECO:0007669"/>
    <property type="project" value="UniProtKB-KW"/>
</dbReference>
<dbReference type="GO" id="GO:0052699">
    <property type="term" value="P:ergothioneine biosynthetic process"/>
    <property type="evidence" value="ECO:0000315"/>
    <property type="project" value="PomBase"/>
</dbReference>
<dbReference type="GO" id="GO:0051321">
    <property type="term" value="P:meiotic cell cycle"/>
    <property type="evidence" value="ECO:0007669"/>
    <property type="project" value="UniProtKB-KW"/>
</dbReference>
<dbReference type="GO" id="GO:0032259">
    <property type="term" value="P:methylation"/>
    <property type="evidence" value="ECO:0007669"/>
    <property type="project" value="UniProtKB-KW"/>
</dbReference>
<dbReference type="GO" id="GO:1903257">
    <property type="term" value="P:selenoneine biosynthetic process"/>
    <property type="evidence" value="ECO:0000315"/>
    <property type="project" value="PomBase"/>
</dbReference>
<dbReference type="Gene3D" id="3.90.1580.10">
    <property type="entry name" value="paralog of FGE (formylglycine-generating enzyme)"/>
    <property type="match status" value="1"/>
</dbReference>
<dbReference type="Gene3D" id="3.40.50.150">
    <property type="entry name" value="Vaccinia Virus protein VP39"/>
    <property type="match status" value="1"/>
</dbReference>
<dbReference type="InterPro" id="IPR016187">
    <property type="entry name" value="CTDL_fold"/>
</dbReference>
<dbReference type="InterPro" id="IPR051128">
    <property type="entry name" value="EgtD_Methyltrsf_superfamily"/>
</dbReference>
<dbReference type="InterPro" id="IPR019257">
    <property type="entry name" value="MeTrfase_dom"/>
</dbReference>
<dbReference type="InterPro" id="IPR029063">
    <property type="entry name" value="SAM-dependent_MTases_sf"/>
</dbReference>
<dbReference type="InterPro" id="IPR017805">
    <property type="entry name" value="SAM_MeTrfase_EasF-type_put"/>
</dbReference>
<dbReference type="InterPro" id="IPR005532">
    <property type="entry name" value="SUMF_dom"/>
</dbReference>
<dbReference type="InterPro" id="IPR042095">
    <property type="entry name" value="SUMF_sf"/>
</dbReference>
<dbReference type="NCBIfam" id="TIGR03439">
    <property type="entry name" value="methyl_EasF"/>
    <property type="match status" value="1"/>
</dbReference>
<dbReference type="PANTHER" id="PTHR43397">
    <property type="entry name" value="ERGOTHIONEINE BIOSYNTHESIS PROTEIN 1"/>
    <property type="match status" value="1"/>
</dbReference>
<dbReference type="PANTHER" id="PTHR43397:SF1">
    <property type="entry name" value="ERGOTHIONEINE BIOSYNTHESIS PROTEIN 1"/>
    <property type="match status" value="1"/>
</dbReference>
<dbReference type="Pfam" id="PF03781">
    <property type="entry name" value="FGE-sulfatase"/>
    <property type="match status" value="1"/>
</dbReference>
<dbReference type="Pfam" id="PF10017">
    <property type="entry name" value="Methyltransf_33"/>
    <property type="match status" value="1"/>
</dbReference>
<dbReference type="SUPFAM" id="SSF56436">
    <property type="entry name" value="C-type lectin-like"/>
    <property type="match status" value="1"/>
</dbReference>
<dbReference type="SUPFAM" id="SSF53335">
    <property type="entry name" value="S-adenosyl-L-methionine-dependent methyltransferases"/>
    <property type="match status" value="1"/>
</dbReference>
<reference key="1">
    <citation type="journal article" date="2002" name="Nature">
        <title>The genome sequence of Schizosaccharomyces pombe.</title>
        <authorList>
            <person name="Wood V."/>
            <person name="Gwilliam R."/>
            <person name="Rajandream M.A."/>
            <person name="Lyne M.H."/>
            <person name="Lyne R."/>
            <person name="Stewart A."/>
            <person name="Sgouros J.G."/>
            <person name="Peat N."/>
            <person name="Hayles J."/>
            <person name="Baker S.G."/>
            <person name="Basham D."/>
            <person name="Bowman S."/>
            <person name="Brooks K."/>
            <person name="Brown D."/>
            <person name="Brown S."/>
            <person name="Chillingworth T."/>
            <person name="Churcher C.M."/>
            <person name="Collins M."/>
            <person name="Connor R."/>
            <person name="Cronin A."/>
            <person name="Davis P."/>
            <person name="Feltwell T."/>
            <person name="Fraser A."/>
            <person name="Gentles S."/>
            <person name="Goble A."/>
            <person name="Hamlin N."/>
            <person name="Harris D.E."/>
            <person name="Hidalgo J."/>
            <person name="Hodgson G."/>
            <person name="Holroyd S."/>
            <person name="Hornsby T."/>
            <person name="Howarth S."/>
            <person name="Huckle E.J."/>
            <person name="Hunt S."/>
            <person name="Jagels K."/>
            <person name="James K.D."/>
            <person name="Jones L."/>
            <person name="Jones M."/>
            <person name="Leather S."/>
            <person name="McDonald S."/>
            <person name="McLean J."/>
            <person name="Mooney P."/>
            <person name="Moule S."/>
            <person name="Mungall K.L."/>
            <person name="Murphy L.D."/>
            <person name="Niblett D."/>
            <person name="Odell C."/>
            <person name="Oliver K."/>
            <person name="O'Neil S."/>
            <person name="Pearson D."/>
            <person name="Quail M.A."/>
            <person name="Rabbinowitsch E."/>
            <person name="Rutherford K.M."/>
            <person name="Rutter S."/>
            <person name="Saunders D."/>
            <person name="Seeger K."/>
            <person name="Sharp S."/>
            <person name="Skelton J."/>
            <person name="Simmonds M.N."/>
            <person name="Squares R."/>
            <person name="Squares S."/>
            <person name="Stevens K."/>
            <person name="Taylor K."/>
            <person name="Taylor R.G."/>
            <person name="Tivey A."/>
            <person name="Walsh S.V."/>
            <person name="Warren T."/>
            <person name="Whitehead S."/>
            <person name="Woodward J.R."/>
            <person name="Volckaert G."/>
            <person name="Aert R."/>
            <person name="Robben J."/>
            <person name="Grymonprez B."/>
            <person name="Weltjens I."/>
            <person name="Vanstreels E."/>
            <person name="Rieger M."/>
            <person name="Schaefer M."/>
            <person name="Mueller-Auer S."/>
            <person name="Gabel C."/>
            <person name="Fuchs M."/>
            <person name="Duesterhoeft A."/>
            <person name="Fritzc C."/>
            <person name="Holzer E."/>
            <person name="Moestl D."/>
            <person name="Hilbert H."/>
            <person name="Borzym K."/>
            <person name="Langer I."/>
            <person name="Beck A."/>
            <person name="Lehrach H."/>
            <person name="Reinhardt R."/>
            <person name="Pohl T.M."/>
            <person name="Eger P."/>
            <person name="Zimmermann W."/>
            <person name="Wedler H."/>
            <person name="Wambutt R."/>
            <person name="Purnelle B."/>
            <person name="Goffeau A."/>
            <person name="Cadieu E."/>
            <person name="Dreano S."/>
            <person name="Gloux S."/>
            <person name="Lelaure V."/>
            <person name="Mottier S."/>
            <person name="Galibert F."/>
            <person name="Aves S.J."/>
            <person name="Xiang Z."/>
            <person name="Hunt C."/>
            <person name="Moore K."/>
            <person name="Hurst S.M."/>
            <person name="Lucas M."/>
            <person name="Rochet M."/>
            <person name="Gaillardin C."/>
            <person name="Tallada V.A."/>
            <person name="Garzon A."/>
            <person name="Thode G."/>
            <person name="Daga R.R."/>
            <person name="Cruzado L."/>
            <person name="Jimenez J."/>
            <person name="Sanchez M."/>
            <person name="del Rey F."/>
            <person name="Benito J."/>
            <person name="Dominguez A."/>
            <person name="Revuelta J.L."/>
            <person name="Moreno S."/>
            <person name="Armstrong J."/>
            <person name="Forsburg S.L."/>
            <person name="Cerutti L."/>
            <person name="Lowe T."/>
            <person name="McCombie W.R."/>
            <person name="Paulsen I."/>
            <person name="Potashkin J."/>
            <person name="Shpakovski G.V."/>
            <person name="Ussery D."/>
            <person name="Barrell B.G."/>
            <person name="Nurse P."/>
        </authorList>
    </citation>
    <scope>NUCLEOTIDE SEQUENCE [LARGE SCALE GENOMIC DNA]</scope>
    <source>
        <strain>972 / ATCC 24843</strain>
    </source>
</reference>
<reference key="2">
    <citation type="journal article" date="2005" name="Curr. Biol.">
        <title>A large-scale screen in S. pombe identifies seven novel genes required for critical meiotic events.</title>
        <authorList>
            <person name="Martin-Castellanos C."/>
            <person name="Blanco M."/>
            <person name="Rozalen A.E."/>
            <person name="Perez-Hidalgo L."/>
            <person name="Garcia A.I."/>
            <person name="Conde F."/>
            <person name="Mata J."/>
            <person name="Ellermeier C."/>
            <person name="Davis L."/>
            <person name="San-Segundo P."/>
            <person name="Smith G.R."/>
            <person name="Moreno S."/>
        </authorList>
    </citation>
    <scope>FUNCTION IN MEIOSIS</scope>
</reference>
<reference key="3">
    <citation type="journal article" date="2006" name="Nat. Biotechnol.">
        <title>ORFeome cloning and global analysis of protein localization in the fission yeast Schizosaccharomyces pombe.</title>
        <authorList>
            <person name="Matsuyama A."/>
            <person name="Arai R."/>
            <person name="Yashiroda Y."/>
            <person name="Shirai A."/>
            <person name="Kamata A."/>
            <person name="Sekido S."/>
            <person name="Kobayashi Y."/>
            <person name="Hashimoto A."/>
            <person name="Hamamoto M."/>
            <person name="Hiraoka Y."/>
            <person name="Horinouchi S."/>
            <person name="Yoshida M."/>
        </authorList>
    </citation>
    <scope>SUBCELLULAR LOCATION [LARGE SCALE ANALYSIS]</scope>
</reference>
<reference key="4">
    <citation type="journal article" date="2014" name="PLoS ONE">
        <title>Genetic and metabolomic dissection of the ergothioneine and selenoneine biosynthetic pathway in the fission yeast, S. pombe, and construction of an overproduction system.</title>
        <authorList>
            <person name="Pluskal T."/>
            <person name="Ueno M."/>
            <person name="Yanagida M."/>
        </authorList>
    </citation>
    <scope>FUNCTION</scope>
    <scope>DISRUPTION PHENOTYPE</scope>
</reference>
<comment type="function">
    <text evidence="4 6">Catalyzes the SAM-dependent triple methylation of the alpha-amino group of histidine to form hercynine and subsequent conjugation with cysteine and oxygen to form hercynylcysteine sulfoxide, the first two steps in the biosynthesis pathway of ergothioneine (PubMed:24828577). May play a role in meiosis (PubMed:16303567).</text>
</comment>
<comment type="catalytic activity">
    <reaction evidence="3">
        <text>L-histidine + 3 S-adenosyl-L-methionine = hercynine + 3 S-adenosyl-L-homocysteine + 3 H(+)</text>
        <dbReference type="Rhea" id="RHEA:38471"/>
        <dbReference type="ChEBI" id="CHEBI:15378"/>
        <dbReference type="ChEBI" id="CHEBI:15781"/>
        <dbReference type="ChEBI" id="CHEBI:57595"/>
        <dbReference type="ChEBI" id="CHEBI:57856"/>
        <dbReference type="ChEBI" id="CHEBI:59789"/>
        <dbReference type="EC" id="2.1.1.44"/>
    </reaction>
</comment>
<comment type="catalytic activity">
    <reaction evidence="3">
        <text>hercynine + L-cysteine + O2 = S-(hercyn-2-yl)-L-cysteine S-oxide + H2O</text>
        <dbReference type="Rhea" id="RHEA:42704"/>
        <dbReference type="ChEBI" id="CHEBI:15377"/>
        <dbReference type="ChEBI" id="CHEBI:15379"/>
        <dbReference type="ChEBI" id="CHEBI:15781"/>
        <dbReference type="ChEBI" id="CHEBI:35235"/>
        <dbReference type="ChEBI" id="CHEBI:82706"/>
        <dbReference type="EC" id="1.21.3.10"/>
    </reaction>
</comment>
<comment type="cofactor">
    <cofactor evidence="3">
        <name>Fe(2+)</name>
        <dbReference type="ChEBI" id="CHEBI:29033"/>
    </cofactor>
    <text evidence="3">Binds 1 Fe(2+) ion per monomer.</text>
</comment>
<comment type="pathway">
    <text evidence="6">Amino-acid biosynthesis; ergothioneine biosynthesis.</text>
</comment>
<comment type="subcellular location">
    <subcellularLocation>
        <location evidence="5">Cytoplasm</location>
    </subcellularLocation>
    <subcellularLocation>
        <location evidence="5">Nucleus</location>
    </subcellularLocation>
</comment>
<comment type="disruption phenotype">
    <text evidence="6">Completely lacks ergothioneine and its precursors (trimethyl histidine/hercynine and hercynylcysteine sulfoxide).</text>
</comment>
<comment type="similarity">
    <text evidence="9">In the N-terminal section; belongs to the methyltransferase superfamily. EgtD family.</text>
</comment>
<comment type="similarity">
    <text evidence="9">In the C-terminal section; belongs to the EgtB family.</text>
</comment>
<protein>
    <recommendedName>
        <fullName evidence="8">Ergothioneine biosynthesis protein 1</fullName>
    </recommendedName>
    <alternativeName>
        <fullName evidence="7">Meiotically up-regulated gene 158 protein</fullName>
    </alternativeName>
    <domain>
        <recommendedName>
            <fullName evidence="3">L-histidine N(alpha)-methyltransferase</fullName>
            <ecNumber evidence="3">2.1.1.44</ecNumber>
        </recommendedName>
    </domain>
    <domain>
        <recommendedName>
            <fullName evidence="3">Hercynylcysteine S-oxide synthase</fullName>
            <ecNumber evidence="3">1.21.3.10</ecNumber>
        </recommendedName>
    </domain>
</protein>
<sequence>MTEIENIGALEVLFSPESIEQSLKRCQLPSTLLYDEKGLRLFDEITNLKEYYLYESELDILKKFSDSIANQLLSPDLPNTVIELGCGNMRKTKLLLDAFEKKGCDVHFYALDLNEAELQKGLQELRQTTNYQHVKVSGICGCFERLLQCLDRFRSEPNSRISMLYLGASIGNFDRKSAASFLRSFASRLNIHDNLLISFDHRNKAELVQLAYDDPYRITEKFEKNILASVNAVFGENLFDENDWEYKSVYDEDLGVHRAYLQAKNEVTVIKGPMFFQFKPSHLILIEESWKNSDQECRQIIEKGDFKLVSKYESTIADYSTYVITKQFPAMLQLPLQPCPSLAEWDALRKVWLFITNKLLNKDNMYTAWIPLRHPPIFYIGHVPVFNDIYLTKIVKNKATANKKHFWEWFQRGIDPDIEDPSKCHWHSEVPESWPSPDQLREYEKESWEYHIVKLCKAMDELSTSEKRILWLCYEHVAMHVETTLYIYVQSFQNANQTVSICGSLPEPAEKLTKAPLWVNVPETEIAVGMPLTTQYTSVGSNLQSSDLSAHENTDELFYFAWDNEKPMRKKLVSSFSIANRPISNGEYLDFINKKSKTERVYPKQWAEIDGTLYIRTMYGLLPLDDYLGWPVMTSYDDLNNYASSQGCRLPTEDELNCFYDRVLERTDEPYVSTEGKATGFQQLHPLALSDNSSNQIFTGAWEWTSTVLEKHEDFEPEELYPDYTRDFFDGKHNVVLGGSFATATRISNRRSFRNFYQAGYKYAWIGARLVKN</sequence>
<name>EGT1_SCHPO</name>
<accession>O94632</accession>
<accession>O94367</accession>
<accession>Q1MTP5</accession>